<feature type="signal peptide" evidence="3">
    <location>
        <begin position="1"/>
        <end position="19"/>
    </location>
</feature>
<feature type="chain" id="PRO_0000042220" description="Antigen-presenting glycoprotein CD1d">
    <location>
        <begin position="20"/>
        <end position="335"/>
    </location>
</feature>
<feature type="topological domain" description="Extracellular" evidence="3">
    <location>
        <begin position="20"/>
        <end position="301"/>
    </location>
</feature>
<feature type="transmembrane region" description="Helical" evidence="3">
    <location>
        <begin position="302"/>
        <end position="322"/>
    </location>
</feature>
<feature type="topological domain" description="Cytoplasmic" evidence="3">
    <location>
        <begin position="323"/>
        <end position="335"/>
    </location>
</feature>
<feature type="domain" description="Ig-like">
    <location>
        <begin position="185"/>
        <end position="292"/>
    </location>
</feature>
<feature type="short sequence motif" description="Internalization signal" evidence="1">
    <location>
        <begin position="331"/>
        <end position="334"/>
    </location>
</feature>
<feature type="binding site" evidence="2">
    <location>
        <position position="98"/>
    </location>
    <ligand>
        <name>a D-galactosylceramide</name>
        <dbReference type="ChEBI" id="CHEBI:36498"/>
    </ligand>
</feature>
<feature type="binding site" evidence="2">
    <location>
        <begin position="169"/>
        <end position="172"/>
    </location>
    <ligand>
        <name>a D-galactosylceramide</name>
        <dbReference type="ChEBI" id="CHEBI:36498"/>
    </ligand>
</feature>
<feature type="binding site" evidence="1">
    <location>
        <position position="169"/>
    </location>
    <ligand>
        <name>a D-galactosylceramide</name>
        <dbReference type="ChEBI" id="CHEBI:36498"/>
    </ligand>
</feature>
<feature type="binding site" evidence="1">
    <location>
        <position position="172"/>
    </location>
    <ligand>
        <name>a D-galactosylceramide</name>
        <dbReference type="ChEBI" id="CHEBI:36498"/>
    </ligand>
</feature>
<feature type="glycosylation site" description="N-linked (GlcNAc...) asparagine" evidence="3">
    <location>
        <position position="38"/>
    </location>
</feature>
<feature type="glycosylation site" description="N-linked (GlcNAc...) asparagine" evidence="3">
    <location>
        <position position="60"/>
    </location>
</feature>
<feature type="glycosylation site" description="N-linked (GlcNAc...) asparagine" evidence="3">
    <location>
        <position position="126"/>
    </location>
</feature>
<feature type="glycosylation site" description="N-linked (GlcNAc...) asparagine" evidence="3">
    <location>
        <position position="181"/>
    </location>
</feature>
<evidence type="ECO:0000250" key="1"/>
<evidence type="ECO:0000250" key="2">
    <source>
        <dbReference type="UniProtKB" id="P15813"/>
    </source>
</evidence>
<evidence type="ECO:0000255" key="3"/>
<gene>
    <name type="primary">CD1D</name>
</gene>
<proteinExistence type="inferred from homology"/>
<accession>Q4ACW4</accession>
<accession>Q4ACU8</accession>
<sequence length="335" mass="37758">MGCLLFLLLWALLQAWGSAEVPQRLFPLRCLQISSFANSSWTRTDGLAWLGELQTHSWSNDSDTVRSLKPWSQGTFSDQQWETLQHIFRVYRSSFTRDVKEFAKMLRLSYPLELQVSAGCEVHPGNASNNFFHVAFQGKDILSFQGTSWEPTQEAPLWVNLAIQVLNQDKWTRETVQWLLNGTCPQFVSGLLESGKSELEKQVKPKAWLSRGPSPGPGRLLLVCHVSGFYPKPVWVKWMRGEQEQQDTQPGDILPNADETWYLRATLDVAAGEAAGLSCRVKHSSLEGQDIILYWGGSYTSVGLIVLAVLACLLFLLIVGFTSRFKRQTSYQGVL</sequence>
<dbReference type="EMBL" id="AB222997">
    <property type="protein sequence ID" value="BAE16552.2"/>
    <property type="molecule type" value="Genomic_DNA"/>
</dbReference>
<dbReference type="EMBL" id="AB222998">
    <property type="protein sequence ID" value="BAE16553.1"/>
    <property type="molecule type" value="Genomic_DNA"/>
</dbReference>
<dbReference type="EMBL" id="AB223044">
    <property type="protein sequence ID" value="BAE16753.2"/>
    <property type="molecule type" value="Genomic_DNA"/>
</dbReference>
<dbReference type="RefSeq" id="NP_001065272.1">
    <property type="nucleotide sequence ID" value="NM_001071804.1"/>
</dbReference>
<dbReference type="SMR" id="Q4ACW4"/>
<dbReference type="FunCoup" id="Q4ACW4">
    <property type="interactions" value="304"/>
</dbReference>
<dbReference type="STRING" id="9598.ENSPTRP00000060660"/>
<dbReference type="GlyCosmos" id="Q4ACW4">
    <property type="glycosylation" value="4 sites, No reported glycans"/>
</dbReference>
<dbReference type="PaxDb" id="9598-ENSPTRP00000002527"/>
<dbReference type="GeneID" id="469524"/>
<dbReference type="KEGG" id="ptr:469524"/>
<dbReference type="CTD" id="912"/>
<dbReference type="eggNOG" id="ENOG502SJH6">
    <property type="taxonomic scope" value="Eukaryota"/>
</dbReference>
<dbReference type="HOGENOM" id="CLU_047501_9_2_1"/>
<dbReference type="InParanoid" id="Q4ACW4"/>
<dbReference type="TreeFam" id="TF336723"/>
<dbReference type="Proteomes" id="UP000002277">
    <property type="component" value="Unplaced"/>
</dbReference>
<dbReference type="GO" id="GO:0016323">
    <property type="term" value="C:basolateral plasma membrane"/>
    <property type="evidence" value="ECO:0007669"/>
    <property type="project" value="UniProtKB-SubCell"/>
</dbReference>
<dbReference type="GO" id="GO:0005789">
    <property type="term" value="C:endoplasmic reticulum membrane"/>
    <property type="evidence" value="ECO:0007669"/>
    <property type="project" value="UniProtKB-SubCell"/>
</dbReference>
<dbReference type="GO" id="GO:0010008">
    <property type="term" value="C:endosome membrane"/>
    <property type="evidence" value="ECO:0007669"/>
    <property type="project" value="UniProtKB-SubCell"/>
</dbReference>
<dbReference type="GO" id="GO:0009897">
    <property type="term" value="C:external side of plasma membrane"/>
    <property type="evidence" value="ECO:0000318"/>
    <property type="project" value="GO_Central"/>
</dbReference>
<dbReference type="GO" id="GO:0005615">
    <property type="term" value="C:extracellular space"/>
    <property type="evidence" value="ECO:0000318"/>
    <property type="project" value="GO_Central"/>
</dbReference>
<dbReference type="GO" id="GO:0005765">
    <property type="term" value="C:lysosomal membrane"/>
    <property type="evidence" value="ECO:0007669"/>
    <property type="project" value="UniProtKB-SubCell"/>
</dbReference>
<dbReference type="GO" id="GO:0005764">
    <property type="term" value="C:lysosome"/>
    <property type="evidence" value="ECO:0000250"/>
    <property type="project" value="UniProtKB"/>
</dbReference>
<dbReference type="GO" id="GO:0030883">
    <property type="term" value="F:endogenous lipid antigen binding"/>
    <property type="evidence" value="ECO:0000318"/>
    <property type="project" value="GO_Central"/>
</dbReference>
<dbReference type="GO" id="GO:0030884">
    <property type="term" value="F:exogenous lipid antigen binding"/>
    <property type="evidence" value="ECO:0000250"/>
    <property type="project" value="UniProtKB"/>
</dbReference>
<dbReference type="GO" id="GO:0030882">
    <property type="term" value="F:lipid antigen binding"/>
    <property type="evidence" value="ECO:0000250"/>
    <property type="project" value="UniProtKB"/>
</dbReference>
<dbReference type="GO" id="GO:0071723">
    <property type="term" value="F:lipopeptide binding"/>
    <property type="evidence" value="ECO:0000318"/>
    <property type="project" value="GO_Central"/>
</dbReference>
<dbReference type="GO" id="GO:0048006">
    <property type="term" value="P:antigen processing and presentation, endogenous lipid antigen via MHC class Ib"/>
    <property type="evidence" value="ECO:0000250"/>
    <property type="project" value="UniProtKB"/>
</dbReference>
<dbReference type="GO" id="GO:0048007">
    <property type="term" value="P:antigen processing and presentation, exogenous lipid antigen via MHC class Ib"/>
    <property type="evidence" value="ECO:0000318"/>
    <property type="project" value="GO_Central"/>
</dbReference>
<dbReference type="GO" id="GO:0006955">
    <property type="term" value="P:immune response"/>
    <property type="evidence" value="ECO:0000318"/>
    <property type="project" value="GO_Central"/>
</dbReference>
<dbReference type="GO" id="GO:0045087">
    <property type="term" value="P:innate immune response"/>
    <property type="evidence" value="ECO:0007669"/>
    <property type="project" value="UniProtKB-KW"/>
</dbReference>
<dbReference type="GO" id="GO:0001916">
    <property type="term" value="P:positive regulation of T cell mediated cytotoxicity"/>
    <property type="evidence" value="ECO:0000318"/>
    <property type="project" value="GO_Central"/>
</dbReference>
<dbReference type="CDD" id="cd21029">
    <property type="entry name" value="IgC1_CD1"/>
    <property type="match status" value="1"/>
</dbReference>
<dbReference type="FunFam" id="2.60.40.10:FF:000254">
    <property type="entry name" value="Antigen-presenting glycoprotein CD1d1"/>
    <property type="match status" value="1"/>
</dbReference>
<dbReference type="FunFam" id="3.30.500.10:FF:000002">
    <property type="entry name" value="Antigen-presenting glycoprotein CD1d1"/>
    <property type="match status" value="1"/>
</dbReference>
<dbReference type="Gene3D" id="2.60.40.10">
    <property type="entry name" value="Immunoglobulins"/>
    <property type="match status" value="1"/>
</dbReference>
<dbReference type="Gene3D" id="3.30.500.10">
    <property type="entry name" value="MHC class I-like antigen recognition-like"/>
    <property type="match status" value="1"/>
</dbReference>
<dbReference type="InterPro" id="IPR007110">
    <property type="entry name" value="Ig-like_dom"/>
</dbReference>
<dbReference type="InterPro" id="IPR036179">
    <property type="entry name" value="Ig-like_dom_sf"/>
</dbReference>
<dbReference type="InterPro" id="IPR013783">
    <property type="entry name" value="Ig-like_fold"/>
</dbReference>
<dbReference type="InterPro" id="IPR003597">
    <property type="entry name" value="Ig_C1-set"/>
</dbReference>
<dbReference type="InterPro" id="IPR050208">
    <property type="entry name" value="MHC_class-I_related"/>
</dbReference>
<dbReference type="InterPro" id="IPR011161">
    <property type="entry name" value="MHC_I-like_Ag-recog"/>
</dbReference>
<dbReference type="InterPro" id="IPR037055">
    <property type="entry name" value="MHC_I-like_Ag-recog_sf"/>
</dbReference>
<dbReference type="InterPro" id="IPR011162">
    <property type="entry name" value="MHC_I/II-like_Ag-recog"/>
</dbReference>
<dbReference type="PANTHER" id="PTHR16675:SF175">
    <property type="entry name" value="ANTIGEN-PRESENTING GLYCOPROTEIN CD1D"/>
    <property type="match status" value="1"/>
</dbReference>
<dbReference type="PANTHER" id="PTHR16675">
    <property type="entry name" value="MHC CLASS I-RELATED"/>
    <property type="match status" value="1"/>
</dbReference>
<dbReference type="Pfam" id="PF07654">
    <property type="entry name" value="C1-set"/>
    <property type="match status" value="1"/>
</dbReference>
<dbReference type="Pfam" id="PF16497">
    <property type="entry name" value="MHC_I_3"/>
    <property type="match status" value="1"/>
</dbReference>
<dbReference type="SMART" id="SM00407">
    <property type="entry name" value="IGc1"/>
    <property type="match status" value="1"/>
</dbReference>
<dbReference type="SUPFAM" id="SSF48726">
    <property type="entry name" value="Immunoglobulin"/>
    <property type="match status" value="1"/>
</dbReference>
<dbReference type="SUPFAM" id="SSF54452">
    <property type="entry name" value="MHC antigen-recognition domain"/>
    <property type="match status" value="1"/>
</dbReference>
<dbReference type="PROSITE" id="PS50835">
    <property type="entry name" value="IG_LIKE"/>
    <property type="match status" value="1"/>
</dbReference>
<name>CD1D_PANTR</name>
<reference key="1">
    <citation type="journal article" date="2005" name="Tissue Antigens">
        <title>Analysis of evolutionary conservation in CD1d molecules among primates.</title>
        <authorList>
            <person name="Saito N."/>
            <person name="Takahashi M."/>
            <person name="Akahata W."/>
            <person name="Ido E."/>
            <person name="Hidaka C."/>
            <person name="Ibuki K."/>
            <person name="Miura T."/>
            <person name="Hayami M."/>
            <person name="Takahashi H."/>
        </authorList>
    </citation>
    <scope>NUCLEOTIDE SEQUENCE [GENOMIC DNA]</scope>
</reference>
<keyword id="KW-1003">Cell membrane</keyword>
<keyword id="KW-0256">Endoplasmic reticulum</keyword>
<keyword id="KW-0967">Endosome</keyword>
<keyword id="KW-0325">Glycoprotein</keyword>
<keyword id="KW-0391">Immunity</keyword>
<keyword id="KW-0393">Immunoglobulin domain</keyword>
<keyword id="KW-0399">Innate immunity</keyword>
<keyword id="KW-0458">Lysosome</keyword>
<keyword id="KW-0472">Membrane</keyword>
<keyword id="KW-1185">Reference proteome</keyword>
<keyword id="KW-0732">Signal</keyword>
<keyword id="KW-0812">Transmembrane</keyword>
<keyword id="KW-1133">Transmembrane helix</keyword>
<protein>
    <recommendedName>
        <fullName>Antigen-presenting glycoprotein CD1d</fullName>
    </recommendedName>
    <cdAntigenName>CD1d</cdAntigenName>
</protein>
<organism>
    <name type="scientific">Pan troglodytes</name>
    <name type="common">Chimpanzee</name>
    <dbReference type="NCBI Taxonomy" id="9598"/>
    <lineage>
        <taxon>Eukaryota</taxon>
        <taxon>Metazoa</taxon>
        <taxon>Chordata</taxon>
        <taxon>Craniata</taxon>
        <taxon>Vertebrata</taxon>
        <taxon>Euteleostomi</taxon>
        <taxon>Mammalia</taxon>
        <taxon>Eutheria</taxon>
        <taxon>Euarchontoglires</taxon>
        <taxon>Primates</taxon>
        <taxon>Haplorrhini</taxon>
        <taxon>Catarrhini</taxon>
        <taxon>Hominidae</taxon>
        <taxon>Pan</taxon>
    </lineage>
</organism>
<comment type="function">
    <text evidence="1">Antigen-presenting protein that binds self and non-self glycolipids and presents them to T-cell receptors on natural killer T-cells.</text>
</comment>
<comment type="subunit">
    <text evidence="1">Heterodimer with B2M (beta-2-microglobulin). Interacts with MHC II (By similarity).</text>
</comment>
<comment type="subcellular location">
    <subcellularLocation>
        <location evidence="2">Cell membrane</location>
        <topology evidence="2">Single-pass type I membrane protein</topology>
    </subcellularLocation>
    <subcellularLocation>
        <location evidence="2">Basolateral cell membrane</location>
        <topology evidence="2">Single-pass type I membrane protein</topology>
    </subcellularLocation>
    <subcellularLocation>
        <location evidence="2">Endosome membrane</location>
        <topology evidence="2">Single-pass type I membrane protein</topology>
    </subcellularLocation>
    <subcellularLocation>
        <location evidence="2">Lysosome membrane</location>
        <topology evidence="2">Single-pass type I membrane protein</topology>
    </subcellularLocation>
    <subcellularLocation>
        <location evidence="2">Endoplasmic reticulum membrane</location>
        <topology evidence="2">Single-pass type I membrane protein</topology>
    </subcellularLocation>
    <text evidence="2">Subject to intracellular trafficking between the cell membrane, endosomes and lysosomes.</text>
</comment>